<accession>Q3MFB7</accession>
<comment type="function">
    <text evidence="1">Protein S19 forms a complex with S13 that binds strongly to the 16S ribosomal RNA.</text>
</comment>
<comment type="similarity">
    <text evidence="1">Belongs to the universal ribosomal protein uS19 family.</text>
</comment>
<feature type="chain" id="PRO_0000265323" description="Small ribosomal subunit protein uS19">
    <location>
        <begin position="1"/>
        <end position="92"/>
    </location>
</feature>
<organism>
    <name type="scientific">Trichormus variabilis (strain ATCC 29413 / PCC 7937)</name>
    <name type="common">Anabaena variabilis</name>
    <dbReference type="NCBI Taxonomy" id="240292"/>
    <lineage>
        <taxon>Bacteria</taxon>
        <taxon>Bacillati</taxon>
        <taxon>Cyanobacteriota</taxon>
        <taxon>Cyanophyceae</taxon>
        <taxon>Nostocales</taxon>
        <taxon>Nostocaceae</taxon>
        <taxon>Trichormus</taxon>
    </lineage>
</organism>
<proteinExistence type="inferred from homology"/>
<protein>
    <recommendedName>
        <fullName evidence="1">Small ribosomal subunit protein uS19</fullName>
    </recommendedName>
    <alternativeName>
        <fullName evidence="2">30S ribosomal protein S19</fullName>
    </alternativeName>
</protein>
<reference key="1">
    <citation type="journal article" date="2014" name="Stand. Genomic Sci.">
        <title>Complete genome sequence of Anabaena variabilis ATCC 29413.</title>
        <authorList>
            <person name="Thiel T."/>
            <person name="Pratte B.S."/>
            <person name="Zhong J."/>
            <person name="Goodwin L."/>
            <person name="Copeland A."/>
            <person name="Lucas S."/>
            <person name="Han C."/>
            <person name="Pitluck S."/>
            <person name="Land M.L."/>
            <person name="Kyrpides N.C."/>
            <person name="Woyke T."/>
        </authorList>
    </citation>
    <scope>NUCLEOTIDE SEQUENCE [LARGE SCALE GENOMIC DNA]</scope>
    <source>
        <strain>ATCC 29413 / PCC 7937</strain>
    </source>
</reference>
<gene>
    <name evidence="1" type="primary">rpsS</name>
    <name evidence="1" type="synonym">rps19</name>
    <name type="ordered locus">Ava_0695</name>
</gene>
<evidence type="ECO:0000255" key="1">
    <source>
        <dbReference type="HAMAP-Rule" id="MF_00531"/>
    </source>
</evidence>
<evidence type="ECO:0000305" key="2"/>
<dbReference type="EMBL" id="CP000117">
    <property type="protein sequence ID" value="ABA20319.1"/>
    <property type="molecule type" value="Genomic_DNA"/>
</dbReference>
<dbReference type="SMR" id="Q3MFB7"/>
<dbReference type="STRING" id="240292.Ava_0695"/>
<dbReference type="KEGG" id="ava:Ava_0695"/>
<dbReference type="eggNOG" id="COG0185">
    <property type="taxonomic scope" value="Bacteria"/>
</dbReference>
<dbReference type="HOGENOM" id="CLU_144911_0_1_3"/>
<dbReference type="Proteomes" id="UP000002533">
    <property type="component" value="Chromosome"/>
</dbReference>
<dbReference type="GO" id="GO:0005737">
    <property type="term" value="C:cytoplasm"/>
    <property type="evidence" value="ECO:0007669"/>
    <property type="project" value="UniProtKB-ARBA"/>
</dbReference>
<dbReference type="GO" id="GO:0015935">
    <property type="term" value="C:small ribosomal subunit"/>
    <property type="evidence" value="ECO:0007669"/>
    <property type="project" value="InterPro"/>
</dbReference>
<dbReference type="GO" id="GO:0019843">
    <property type="term" value="F:rRNA binding"/>
    <property type="evidence" value="ECO:0007669"/>
    <property type="project" value="UniProtKB-UniRule"/>
</dbReference>
<dbReference type="GO" id="GO:0003735">
    <property type="term" value="F:structural constituent of ribosome"/>
    <property type="evidence" value="ECO:0007669"/>
    <property type="project" value="InterPro"/>
</dbReference>
<dbReference type="GO" id="GO:0000028">
    <property type="term" value="P:ribosomal small subunit assembly"/>
    <property type="evidence" value="ECO:0007669"/>
    <property type="project" value="TreeGrafter"/>
</dbReference>
<dbReference type="GO" id="GO:0006412">
    <property type="term" value="P:translation"/>
    <property type="evidence" value="ECO:0007669"/>
    <property type="project" value="UniProtKB-UniRule"/>
</dbReference>
<dbReference type="FunFam" id="3.30.860.10:FF:000001">
    <property type="entry name" value="30S ribosomal protein S19"/>
    <property type="match status" value="1"/>
</dbReference>
<dbReference type="Gene3D" id="3.30.860.10">
    <property type="entry name" value="30s Ribosomal Protein S19, Chain A"/>
    <property type="match status" value="1"/>
</dbReference>
<dbReference type="HAMAP" id="MF_00531">
    <property type="entry name" value="Ribosomal_uS19"/>
    <property type="match status" value="1"/>
</dbReference>
<dbReference type="InterPro" id="IPR002222">
    <property type="entry name" value="Ribosomal_uS19"/>
</dbReference>
<dbReference type="InterPro" id="IPR005732">
    <property type="entry name" value="Ribosomal_uS19_bac-type"/>
</dbReference>
<dbReference type="InterPro" id="IPR020934">
    <property type="entry name" value="Ribosomal_uS19_CS"/>
</dbReference>
<dbReference type="InterPro" id="IPR023575">
    <property type="entry name" value="Ribosomal_uS19_SF"/>
</dbReference>
<dbReference type="NCBIfam" id="TIGR01050">
    <property type="entry name" value="rpsS_bact"/>
    <property type="match status" value="1"/>
</dbReference>
<dbReference type="PANTHER" id="PTHR11880">
    <property type="entry name" value="RIBOSOMAL PROTEIN S19P FAMILY MEMBER"/>
    <property type="match status" value="1"/>
</dbReference>
<dbReference type="PANTHER" id="PTHR11880:SF8">
    <property type="entry name" value="SMALL RIBOSOMAL SUBUNIT PROTEIN US19M"/>
    <property type="match status" value="1"/>
</dbReference>
<dbReference type="Pfam" id="PF00203">
    <property type="entry name" value="Ribosomal_S19"/>
    <property type="match status" value="1"/>
</dbReference>
<dbReference type="PIRSF" id="PIRSF002144">
    <property type="entry name" value="Ribosomal_S19"/>
    <property type="match status" value="1"/>
</dbReference>
<dbReference type="PRINTS" id="PR00975">
    <property type="entry name" value="RIBOSOMALS19"/>
</dbReference>
<dbReference type="SUPFAM" id="SSF54570">
    <property type="entry name" value="Ribosomal protein S19"/>
    <property type="match status" value="1"/>
</dbReference>
<dbReference type="PROSITE" id="PS00323">
    <property type="entry name" value="RIBOSOMAL_S19"/>
    <property type="match status" value="1"/>
</dbReference>
<sequence length="92" mass="10312">MGRSLKKGPFIADHLLSKIEKLNDKNEKQVIKTWSRASTILPLMVGHTIAVHNGRQHVPVFISEQMVGHKLGEFAPTRTYRGHGKSDKKAGR</sequence>
<keyword id="KW-0687">Ribonucleoprotein</keyword>
<keyword id="KW-0689">Ribosomal protein</keyword>
<keyword id="KW-0694">RNA-binding</keyword>
<keyword id="KW-0699">rRNA-binding</keyword>
<name>RS19_TRIV2</name>